<accession>Q8DSN8</accession>
<dbReference type="EC" id="4.2.1.59" evidence="1"/>
<dbReference type="EMBL" id="AE014133">
    <property type="protein sequence ID" value="AAN59370.1"/>
    <property type="molecule type" value="Genomic_DNA"/>
</dbReference>
<dbReference type="RefSeq" id="NP_722064.1">
    <property type="nucleotide sequence ID" value="NC_004350.2"/>
</dbReference>
<dbReference type="RefSeq" id="WP_002279631.1">
    <property type="nucleotide sequence ID" value="NC_004350.2"/>
</dbReference>
<dbReference type="SMR" id="Q8DSN8"/>
<dbReference type="STRING" id="210007.SMU_1737"/>
<dbReference type="KEGG" id="smu:SMU_1737"/>
<dbReference type="PATRIC" id="fig|210007.7.peg.1553"/>
<dbReference type="eggNOG" id="COG0764">
    <property type="taxonomic scope" value="Bacteria"/>
</dbReference>
<dbReference type="HOGENOM" id="CLU_078912_1_2_9"/>
<dbReference type="OrthoDB" id="9772788at2"/>
<dbReference type="PhylomeDB" id="Q8DSN8"/>
<dbReference type="Proteomes" id="UP000002512">
    <property type="component" value="Chromosome"/>
</dbReference>
<dbReference type="GO" id="GO:0005737">
    <property type="term" value="C:cytoplasm"/>
    <property type="evidence" value="ECO:0007669"/>
    <property type="project" value="UniProtKB-SubCell"/>
</dbReference>
<dbReference type="GO" id="GO:0016020">
    <property type="term" value="C:membrane"/>
    <property type="evidence" value="ECO:0007669"/>
    <property type="project" value="GOC"/>
</dbReference>
<dbReference type="GO" id="GO:0019171">
    <property type="term" value="F:(3R)-hydroxyacyl-[acyl-carrier-protein] dehydratase activity"/>
    <property type="evidence" value="ECO:0007669"/>
    <property type="project" value="UniProtKB-EC"/>
</dbReference>
<dbReference type="GO" id="GO:0006633">
    <property type="term" value="P:fatty acid biosynthetic process"/>
    <property type="evidence" value="ECO:0007669"/>
    <property type="project" value="UniProtKB-UniRule"/>
</dbReference>
<dbReference type="GO" id="GO:0009245">
    <property type="term" value="P:lipid A biosynthetic process"/>
    <property type="evidence" value="ECO:0007669"/>
    <property type="project" value="UniProtKB-UniRule"/>
</dbReference>
<dbReference type="CDD" id="cd01288">
    <property type="entry name" value="FabZ"/>
    <property type="match status" value="1"/>
</dbReference>
<dbReference type="FunFam" id="3.10.129.10:FF:000001">
    <property type="entry name" value="3-hydroxyacyl-[acyl-carrier-protein] dehydratase FabZ"/>
    <property type="match status" value="1"/>
</dbReference>
<dbReference type="Gene3D" id="3.10.129.10">
    <property type="entry name" value="Hotdog Thioesterase"/>
    <property type="match status" value="1"/>
</dbReference>
<dbReference type="HAMAP" id="MF_00406">
    <property type="entry name" value="FabZ"/>
    <property type="match status" value="1"/>
</dbReference>
<dbReference type="InterPro" id="IPR013114">
    <property type="entry name" value="FabA_FabZ"/>
</dbReference>
<dbReference type="InterPro" id="IPR010084">
    <property type="entry name" value="FabZ"/>
</dbReference>
<dbReference type="InterPro" id="IPR029069">
    <property type="entry name" value="HotDog_dom_sf"/>
</dbReference>
<dbReference type="NCBIfam" id="TIGR01750">
    <property type="entry name" value="fabZ"/>
    <property type="match status" value="1"/>
</dbReference>
<dbReference type="NCBIfam" id="NF000582">
    <property type="entry name" value="PRK00006.1"/>
    <property type="match status" value="1"/>
</dbReference>
<dbReference type="PANTHER" id="PTHR30272">
    <property type="entry name" value="3-HYDROXYACYL-[ACYL-CARRIER-PROTEIN] DEHYDRATASE"/>
    <property type="match status" value="1"/>
</dbReference>
<dbReference type="PANTHER" id="PTHR30272:SF1">
    <property type="entry name" value="3-HYDROXYACYL-[ACYL-CARRIER-PROTEIN] DEHYDRATASE"/>
    <property type="match status" value="1"/>
</dbReference>
<dbReference type="Pfam" id="PF07977">
    <property type="entry name" value="FabA"/>
    <property type="match status" value="1"/>
</dbReference>
<dbReference type="SUPFAM" id="SSF54637">
    <property type="entry name" value="Thioesterase/thiol ester dehydrase-isomerase"/>
    <property type="match status" value="1"/>
</dbReference>
<comment type="function">
    <text evidence="1">Involved in unsaturated fatty acids biosynthesis. Catalyzes the dehydration of short chain beta-hydroxyacyl-ACPs and long chain saturated and unsaturated beta-hydroxyacyl-ACPs.</text>
</comment>
<comment type="catalytic activity">
    <reaction evidence="1">
        <text>a (3R)-hydroxyacyl-[ACP] = a (2E)-enoyl-[ACP] + H2O</text>
        <dbReference type="Rhea" id="RHEA:13097"/>
        <dbReference type="Rhea" id="RHEA-COMP:9925"/>
        <dbReference type="Rhea" id="RHEA-COMP:9945"/>
        <dbReference type="ChEBI" id="CHEBI:15377"/>
        <dbReference type="ChEBI" id="CHEBI:78784"/>
        <dbReference type="ChEBI" id="CHEBI:78827"/>
        <dbReference type="EC" id="4.2.1.59"/>
    </reaction>
</comment>
<comment type="subcellular location">
    <subcellularLocation>
        <location evidence="1">Cytoplasm</location>
    </subcellularLocation>
</comment>
<comment type="similarity">
    <text evidence="1">Belongs to the thioester dehydratase family. FabZ subfamily.</text>
</comment>
<name>FABZ_STRMU</name>
<evidence type="ECO:0000255" key="1">
    <source>
        <dbReference type="HAMAP-Rule" id="MF_00406"/>
    </source>
</evidence>
<protein>
    <recommendedName>
        <fullName evidence="1">3-hydroxyacyl-[acyl-carrier-protein] dehydratase FabZ</fullName>
        <ecNumber evidence="1">4.2.1.59</ecNumber>
    </recommendedName>
    <alternativeName>
        <fullName evidence="1">(3R)-hydroxymyristoyl-[acyl-carrier-protein] dehydratase</fullName>
        <shortName evidence="1">(3R)-hydroxymyristoyl-ACP dehydrase</shortName>
    </alternativeName>
    <alternativeName>
        <fullName evidence="1">Beta-hydroxyacyl-ACP dehydratase</fullName>
    </alternativeName>
</protein>
<gene>
    <name evidence="1" type="primary">fabZ</name>
    <name type="ordered locus">SMU_1737</name>
</gene>
<keyword id="KW-0963">Cytoplasm</keyword>
<keyword id="KW-0441">Lipid A biosynthesis</keyword>
<keyword id="KW-0444">Lipid biosynthesis</keyword>
<keyword id="KW-0443">Lipid metabolism</keyword>
<keyword id="KW-0456">Lyase</keyword>
<keyword id="KW-1185">Reference proteome</keyword>
<proteinExistence type="inferred from homology"/>
<reference key="1">
    <citation type="journal article" date="2002" name="Proc. Natl. Acad. Sci. U.S.A.">
        <title>Genome sequence of Streptococcus mutans UA159, a cariogenic dental pathogen.</title>
        <authorList>
            <person name="Ajdic D.J."/>
            <person name="McShan W.M."/>
            <person name="McLaughlin R.E."/>
            <person name="Savic G."/>
            <person name="Chang J."/>
            <person name="Carson M.B."/>
            <person name="Primeaux C."/>
            <person name="Tian R."/>
            <person name="Kenton S."/>
            <person name="Jia H.G."/>
            <person name="Lin S.P."/>
            <person name="Qian Y."/>
            <person name="Li S."/>
            <person name="Zhu H."/>
            <person name="Najar F.Z."/>
            <person name="Lai H."/>
            <person name="White J."/>
            <person name="Roe B.A."/>
            <person name="Ferretti J.J."/>
        </authorList>
    </citation>
    <scope>NUCLEOTIDE SEQUENCE [LARGE SCALE GENOMIC DNA]</scope>
    <source>
        <strain>ATCC 700610 / UA159</strain>
    </source>
</reference>
<feature type="chain" id="PRO_0000091740" description="3-hydroxyacyl-[acyl-carrier-protein] dehydratase FabZ">
    <location>
        <begin position="1"/>
        <end position="140"/>
    </location>
</feature>
<feature type="active site" evidence="1">
    <location>
        <position position="47"/>
    </location>
</feature>
<sequence length="140" mass="15371">MIDISKIREALPHRYPILLVDRVLEVSDDEIVAIKNVTINEPFFNGHFPQYPVMPGVLIMEALAQTAGVLELSKKENTGKLVFYAGMDKVKFKKQVVPGDQLVMTAKFVKRRGTIAVVEAKAEVDGKLAASGTLTFAIGN</sequence>
<organism>
    <name type="scientific">Streptococcus mutans serotype c (strain ATCC 700610 / UA159)</name>
    <dbReference type="NCBI Taxonomy" id="210007"/>
    <lineage>
        <taxon>Bacteria</taxon>
        <taxon>Bacillati</taxon>
        <taxon>Bacillota</taxon>
        <taxon>Bacilli</taxon>
        <taxon>Lactobacillales</taxon>
        <taxon>Streptococcaceae</taxon>
        <taxon>Streptococcus</taxon>
    </lineage>
</organism>